<sequence length="691" mass="74767">MEIAPQEAPPVPGADGDIEEAPAEAGSPSPASPPADGRLKAAAKRVTFPSDEDIVSGAVEPKDPWRHAQNVTVDEVIGAYKQACQKLNCRQIPKLLRQLQEFTDLGHRLDCLDLKGEKLDYKTCEALEEVFKRLQFKVVDLEQTNLDEDGASALFDMIEYYESATHLNISFNKHIGTRGWQAAAHMMRKTSCLQYLDARNTPLLDHSAPFVARALRIRSSLAVLHLENASLSGRPLMLLATALKMNMNLRELYLADNKLNGLQDSAQLGNLLKFNCSLQILDLRNNHVLDSGLAYICEGLKEQRKGLVTLVLWNNQLTHTGMAFLGMTLPHTQSLETLNLGHNPIGNEGVRHLKNGLISNRSVLRLGLASTKLTCEGAVAVAEFIAESPRLLRLDLRENEIKTGGLMALSLALKVNHSLLRLDLDREPKKEAVKSFIETQKALLAEIQNGCKRNLVLAREREEKEQPPQLSASMPETTATEPQPDDEPAAGVQNGAPSPAPSPDSDSDSDSDGEEEEEEEGERDETPCPALVPPTDSLGPGDRSPPGSPSTPTEQRISVSSPGRGHKVFVVTRVESPPERAEPPASPTPPSPPPPPSPPASPSLPPAGAIDTRDTGSSEPQPPPEPPRSGPPLPNGLKPEFALALPPEPPPGPEVKGGSCGLEHELSCSKNEKELEELLLEASQESGQETL</sequence>
<dbReference type="EMBL" id="AB075866">
    <property type="protein sequence ID" value="BAB85572.1"/>
    <property type="status" value="ALT_INIT"/>
    <property type="molecule type" value="mRNA"/>
</dbReference>
<dbReference type="EMBL" id="AC011489">
    <property type="status" value="NOT_ANNOTATED_CDS"/>
    <property type="molecule type" value="Genomic_DNA"/>
</dbReference>
<dbReference type="EMBL" id="AC005757">
    <property type="protein sequence ID" value="AAC62258.1"/>
    <property type="status" value="ALT_SEQ"/>
    <property type="molecule type" value="Genomic_DNA"/>
</dbReference>
<dbReference type="EMBL" id="BC035704">
    <property type="protein sequence ID" value="AAH35704.1"/>
    <property type="molecule type" value="mRNA"/>
</dbReference>
<dbReference type="EMBL" id="BQ638089">
    <property type="status" value="NOT_ANNOTATED_CDS"/>
    <property type="molecule type" value="mRNA"/>
</dbReference>
<dbReference type="CCDS" id="CCDS56096.1">
    <molecule id="O75864-1"/>
</dbReference>
<dbReference type="RefSeq" id="NP_061994.1">
    <molecule id="O75864-1"/>
    <property type="nucleotide sequence ID" value="NM_019121.2"/>
</dbReference>
<dbReference type="SMR" id="O75864"/>
<dbReference type="BioGRID" id="129838">
    <property type="interactions" value="43"/>
</dbReference>
<dbReference type="FunCoup" id="O75864">
    <property type="interactions" value="699"/>
</dbReference>
<dbReference type="IntAct" id="O75864">
    <property type="interactions" value="19"/>
</dbReference>
<dbReference type="MINT" id="O75864"/>
<dbReference type="STRING" id="9606.ENSP00000221462"/>
<dbReference type="GlyGen" id="O75864">
    <property type="glycosylation" value="1 site"/>
</dbReference>
<dbReference type="iPTMnet" id="O75864"/>
<dbReference type="PhosphoSitePlus" id="O75864"/>
<dbReference type="BioMuta" id="PPP1R37"/>
<dbReference type="jPOST" id="O75864"/>
<dbReference type="MassIVE" id="O75864"/>
<dbReference type="PaxDb" id="9606-ENSP00000221462"/>
<dbReference type="PeptideAtlas" id="O75864"/>
<dbReference type="ProteomicsDB" id="50229">
    <molecule id="O75864-1"/>
</dbReference>
<dbReference type="ProteomicsDB" id="50230">
    <molecule id="O75864-2"/>
</dbReference>
<dbReference type="Pumba" id="O75864"/>
<dbReference type="Antibodypedia" id="49146">
    <property type="antibodies" value="50 antibodies from 12 providers"/>
</dbReference>
<dbReference type="DNASU" id="284352"/>
<dbReference type="Ensembl" id="ENST00000221462.9">
    <molecule id="O75864-1"/>
    <property type="protein sequence ID" value="ENSP00000221462.3"/>
    <property type="gene ID" value="ENSG00000104866.11"/>
</dbReference>
<dbReference type="GeneID" id="284352"/>
<dbReference type="KEGG" id="hsa:284352"/>
<dbReference type="MANE-Select" id="ENST00000221462.9">
    <property type="protein sequence ID" value="ENSP00000221462.3"/>
    <property type="RefSeq nucleotide sequence ID" value="NM_019121.2"/>
    <property type="RefSeq protein sequence ID" value="NP_061994.1"/>
</dbReference>
<dbReference type="UCSC" id="uc021uvs.2">
    <molecule id="O75864-1"/>
    <property type="organism name" value="human"/>
</dbReference>
<dbReference type="AGR" id="HGNC:27607"/>
<dbReference type="CTD" id="284352"/>
<dbReference type="DisGeNET" id="284352"/>
<dbReference type="GeneCards" id="PPP1R37"/>
<dbReference type="HGNC" id="HGNC:27607">
    <property type="gene designation" value="PPP1R37"/>
</dbReference>
<dbReference type="HPA" id="ENSG00000104866">
    <property type="expression patterns" value="Low tissue specificity"/>
</dbReference>
<dbReference type="neXtProt" id="NX_O75864"/>
<dbReference type="OpenTargets" id="ENSG00000104866"/>
<dbReference type="VEuPathDB" id="HostDB:ENSG00000104866"/>
<dbReference type="eggNOG" id="KOG1908">
    <property type="taxonomic scope" value="Eukaryota"/>
</dbReference>
<dbReference type="GeneTree" id="ENSGT00940000157454"/>
<dbReference type="HOGENOM" id="CLU_014302_0_0_1"/>
<dbReference type="InParanoid" id="O75864"/>
<dbReference type="OMA" id="EHELRCP"/>
<dbReference type="OrthoDB" id="10034042at2759"/>
<dbReference type="PAN-GO" id="O75864">
    <property type="GO annotations" value="0 GO annotations based on evolutionary models"/>
</dbReference>
<dbReference type="PhylomeDB" id="O75864"/>
<dbReference type="TreeFam" id="TF328391"/>
<dbReference type="PathwayCommons" id="O75864"/>
<dbReference type="SignaLink" id="O75864"/>
<dbReference type="BioGRID-ORCS" id="284352">
    <property type="hits" value="22 hits in 1154 CRISPR screens"/>
</dbReference>
<dbReference type="ChiTaRS" id="PPP1R37">
    <property type="organism name" value="human"/>
</dbReference>
<dbReference type="GenomeRNAi" id="284352"/>
<dbReference type="Pharos" id="O75864">
    <property type="development level" value="Tdark"/>
</dbReference>
<dbReference type="PRO" id="PR:O75864"/>
<dbReference type="Proteomes" id="UP000005640">
    <property type="component" value="Chromosome 19"/>
</dbReference>
<dbReference type="RNAct" id="O75864">
    <property type="molecule type" value="protein"/>
</dbReference>
<dbReference type="Bgee" id="ENSG00000104866">
    <property type="expression patterns" value="Expressed in adenohypophysis and 118 other cell types or tissues"/>
</dbReference>
<dbReference type="ExpressionAtlas" id="O75864">
    <property type="expression patterns" value="baseline and differential"/>
</dbReference>
<dbReference type="GO" id="GO:0004864">
    <property type="term" value="F:protein phosphatase inhibitor activity"/>
    <property type="evidence" value="ECO:0007669"/>
    <property type="project" value="UniProtKB-KW"/>
</dbReference>
<dbReference type="CDD" id="cd00116">
    <property type="entry name" value="LRR_RI"/>
    <property type="match status" value="1"/>
</dbReference>
<dbReference type="FunFam" id="3.80.10.10:FF:000324">
    <property type="entry name" value="Protein phosphatase 1 regulatory subunit 37"/>
    <property type="match status" value="1"/>
</dbReference>
<dbReference type="Gene3D" id="3.80.10.10">
    <property type="entry name" value="Ribonuclease Inhibitor"/>
    <property type="match status" value="1"/>
</dbReference>
<dbReference type="InterPro" id="IPR001611">
    <property type="entry name" value="Leu-rich_rpt"/>
</dbReference>
<dbReference type="InterPro" id="IPR032675">
    <property type="entry name" value="LRR_dom_sf"/>
</dbReference>
<dbReference type="InterPro" id="IPR051279">
    <property type="entry name" value="PP1-Reg/Actin-Interact_Protein"/>
</dbReference>
<dbReference type="PANTHER" id="PTHR24112">
    <property type="entry name" value="LEUCINE-RICH REPEAT, ISOFORM F-RELATED"/>
    <property type="match status" value="1"/>
</dbReference>
<dbReference type="PANTHER" id="PTHR24112:SF9">
    <property type="entry name" value="PROTEIN PHOSPHATASE 1 REGULATORY SUBUNIT 37"/>
    <property type="match status" value="1"/>
</dbReference>
<dbReference type="Pfam" id="PF13516">
    <property type="entry name" value="LRR_6"/>
    <property type="match status" value="3"/>
</dbReference>
<dbReference type="SMART" id="SM00368">
    <property type="entry name" value="LRR_RI"/>
    <property type="match status" value="7"/>
</dbReference>
<dbReference type="SUPFAM" id="SSF52047">
    <property type="entry name" value="RNI-like"/>
    <property type="match status" value="1"/>
</dbReference>
<dbReference type="PROSITE" id="PS51450">
    <property type="entry name" value="LRR"/>
    <property type="match status" value="5"/>
</dbReference>
<proteinExistence type="evidence at protein level"/>
<protein>
    <recommendedName>
        <fullName>Protein phosphatase 1 regulatory subunit 37</fullName>
    </recommendedName>
    <alternativeName>
        <fullName>Leucine-rich repeat-containing protein 68</fullName>
    </alternativeName>
</protein>
<name>PPR37_HUMAN</name>
<reference key="1">
    <citation type="journal article" date="2001" name="DNA Res.">
        <title>Prediction of the coding sequences of unidentified human genes. XXII. The complete sequences of 50 new cDNA clones which code for large proteins.</title>
        <authorList>
            <person name="Nagase T."/>
            <person name="Kikuno R."/>
            <person name="Ohara O."/>
        </authorList>
    </citation>
    <scope>NUCLEOTIDE SEQUENCE [LARGE SCALE MRNA] (ISOFORM 2)</scope>
    <source>
        <tissue>Brain</tissue>
    </source>
</reference>
<reference key="2">
    <citation type="journal article" date="2004" name="Nature">
        <title>The DNA sequence and biology of human chromosome 19.</title>
        <authorList>
            <person name="Grimwood J."/>
            <person name="Gordon L.A."/>
            <person name="Olsen A.S."/>
            <person name="Terry A."/>
            <person name="Schmutz J."/>
            <person name="Lamerdin J.E."/>
            <person name="Hellsten U."/>
            <person name="Goodstein D."/>
            <person name="Couronne O."/>
            <person name="Tran-Gyamfi M."/>
            <person name="Aerts A."/>
            <person name="Altherr M."/>
            <person name="Ashworth L."/>
            <person name="Bajorek E."/>
            <person name="Black S."/>
            <person name="Branscomb E."/>
            <person name="Caenepeel S."/>
            <person name="Carrano A.V."/>
            <person name="Caoile C."/>
            <person name="Chan Y.M."/>
            <person name="Christensen M."/>
            <person name="Cleland C.A."/>
            <person name="Copeland A."/>
            <person name="Dalin E."/>
            <person name="Dehal P."/>
            <person name="Denys M."/>
            <person name="Detter J.C."/>
            <person name="Escobar J."/>
            <person name="Flowers D."/>
            <person name="Fotopulos D."/>
            <person name="Garcia C."/>
            <person name="Georgescu A.M."/>
            <person name="Glavina T."/>
            <person name="Gomez M."/>
            <person name="Gonzales E."/>
            <person name="Groza M."/>
            <person name="Hammon N."/>
            <person name="Hawkins T."/>
            <person name="Haydu L."/>
            <person name="Ho I."/>
            <person name="Huang W."/>
            <person name="Israni S."/>
            <person name="Jett J."/>
            <person name="Kadner K."/>
            <person name="Kimball H."/>
            <person name="Kobayashi A."/>
            <person name="Larionov V."/>
            <person name="Leem S.-H."/>
            <person name="Lopez F."/>
            <person name="Lou Y."/>
            <person name="Lowry S."/>
            <person name="Malfatti S."/>
            <person name="Martinez D."/>
            <person name="McCready P.M."/>
            <person name="Medina C."/>
            <person name="Morgan J."/>
            <person name="Nelson K."/>
            <person name="Nolan M."/>
            <person name="Ovcharenko I."/>
            <person name="Pitluck S."/>
            <person name="Pollard M."/>
            <person name="Popkie A.P."/>
            <person name="Predki P."/>
            <person name="Quan G."/>
            <person name="Ramirez L."/>
            <person name="Rash S."/>
            <person name="Retterer J."/>
            <person name="Rodriguez A."/>
            <person name="Rogers S."/>
            <person name="Salamov A."/>
            <person name="Salazar A."/>
            <person name="She X."/>
            <person name="Smith D."/>
            <person name="Slezak T."/>
            <person name="Solovyev V."/>
            <person name="Thayer N."/>
            <person name="Tice H."/>
            <person name="Tsai M."/>
            <person name="Ustaszewska A."/>
            <person name="Vo N."/>
            <person name="Wagner M."/>
            <person name="Wheeler J."/>
            <person name="Wu K."/>
            <person name="Xie G."/>
            <person name="Yang J."/>
            <person name="Dubchak I."/>
            <person name="Furey T.S."/>
            <person name="DeJong P."/>
            <person name="Dickson M."/>
            <person name="Gordon D."/>
            <person name="Eichler E.E."/>
            <person name="Pennacchio L.A."/>
            <person name="Richardson P."/>
            <person name="Stubbs L."/>
            <person name="Rokhsar D.S."/>
            <person name="Myers R.M."/>
            <person name="Rubin E.M."/>
            <person name="Lucas S.M."/>
        </authorList>
    </citation>
    <scope>NUCLEOTIDE SEQUENCE [LARGE SCALE GENOMIC DNA]</scope>
</reference>
<reference key="3">
    <citation type="journal article" date="2004" name="Genome Res.">
        <title>The status, quality, and expansion of the NIH full-length cDNA project: the Mammalian Gene Collection (MGC).</title>
        <authorList>
            <consortium name="The MGC Project Team"/>
        </authorList>
    </citation>
    <scope>NUCLEOTIDE SEQUENCE [LARGE SCALE MRNA] OF 1-180 (ISOFORM 1)</scope>
    <source>
        <tissue>Duodenum</tissue>
    </source>
</reference>
<reference key="4">
    <citation type="journal article" date="2002" name="Mol. Vis.">
        <title>Expressed sequence tag analysis of human retina for the NEIBank project: retbindin, an abundant, novel retinal cDNA and alternative splicing of other retina-preferred gene transcripts.</title>
        <authorList>
            <person name="Wistow G."/>
            <person name="Berstein S.L."/>
            <person name="Wyatt M.K."/>
            <person name="Ray S."/>
            <person name="Behal A."/>
            <person name="Touchman J.W."/>
            <person name="Bouffard G."/>
            <person name="Smith D."/>
            <person name="Peterson K."/>
        </authorList>
    </citation>
    <scope>NUCLEOTIDE SEQUENCE [MRNA] OF 254-460</scope>
</reference>
<reference key="5">
    <citation type="journal article" date="2008" name="Proc. Natl. Acad. Sci. U.S.A.">
        <title>A quantitative atlas of mitotic phosphorylation.</title>
        <authorList>
            <person name="Dephoure N."/>
            <person name="Zhou C."/>
            <person name="Villen J."/>
            <person name="Beausoleil S.A."/>
            <person name="Bakalarski C.E."/>
            <person name="Elledge S.J."/>
            <person name="Gygi S.P."/>
        </authorList>
    </citation>
    <scope>PHOSPHORYLATION [LARGE SCALE ANALYSIS] AT SER-561</scope>
    <scope>IDENTIFICATION BY MASS SPECTROMETRY [LARGE SCALE ANALYSIS]</scope>
    <source>
        <tissue>Cervix carcinoma</tissue>
    </source>
</reference>
<reference key="6">
    <citation type="journal article" date="2009" name="Chem. Biol.">
        <title>Docking motif-guided mapping of the interactome of protein phosphatase-1.</title>
        <authorList>
            <person name="Hendrickx A."/>
            <person name="Beullens M."/>
            <person name="Ceulemans H."/>
            <person name="Den Abt T."/>
            <person name="Van Eynde A."/>
            <person name="Nicolaescu E."/>
            <person name="Lesage B."/>
            <person name="Bollen M."/>
        </authorList>
    </citation>
    <scope>FUNCTION</scope>
    <scope>INTERACTION WITH PPP1CA</scope>
</reference>
<reference key="7">
    <citation type="journal article" date="2013" name="J. Proteome Res.">
        <title>Toward a comprehensive characterization of a human cancer cell phosphoproteome.</title>
        <authorList>
            <person name="Zhou H."/>
            <person name="Di Palma S."/>
            <person name="Preisinger C."/>
            <person name="Peng M."/>
            <person name="Polat A.N."/>
            <person name="Heck A.J."/>
            <person name="Mohammed S."/>
        </authorList>
    </citation>
    <scope>PHOSPHORYLATION [LARGE SCALE ANALYSIS] AT SER-50</scope>
    <scope>IDENTIFICATION BY MASS SPECTROMETRY [LARGE SCALE ANALYSIS]</scope>
    <source>
        <tissue>Cervix carcinoma</tissue>
        <tissue>Erythroleukemia</tissue>
    </source>
</reference>
<keyword id="KW-0025">Alternative splicing</keyword>
<keyword id="KW-0433">Leucine-rich repeat</keyword>
<keyword id="KW-0597">Phosphoprotein</keyword>
<keyword id="KW-0650">Protein phosphatase inhibitor</keyword>
<keyword id="KW-1267">Proteomics identification</keyword>
<keyword id="KW-1185">Reference proteome</keyword>
<keyword id="KW-0677">Repeat</keyword>
<accession>O75864</accession>
<accession>B5MDA4</accession>
<accession>Q8IWK3</accession>
<accession>Q8TF16</accession>
<organism>
    <name type="scientific">Homo sapiens</name>
    <name type="common">Human</name>
    <dbReference type="NCBI Taxonomy" id="9606"/>
    <lineage>
        <taxon>Eukaryota</taxon>
        <taxon>Metazoa</taxon>
        <taxon>Chordata</taxon>
        <taxon>Craniata</taxon>
        <taxon>Vertebrata</taxon>
        <taxon>Euteleostomi</taxon>
        <taxon>Mammalia</taxon>
        <taxon>Eutheria</taxon>
        <taxon>Euarchontoglires</taxon>
        <taxon>Primates</taxon>
        <taxon>Haplorrhini</taxon>
        <taxon>Catarrhini</taxon>
        <taxon>Hominidae</taxon>
        <taxon>Homo</taxon>
    </lineage>
</organism>
<feature type="chain" id="PRO_0000320939" description="Protein phosphatase 1 regulatory subunit 37">
    <location>
        <begin position="1"/>
        <end position="691"/>
    </location>
</feature>
<feature type="repeat" description="LRR 1">
    <location>
        <begin position="220"/>
        <end position="240"/>
    </location>
</feature>
<feature type="repeat" description="LRR 2">
    <location>
        <begin position="248"/>
        <end position="269"/>
    </location>
</feature>
<feature type="repeat" description="LRR 3">
    <location>
        <begin position="277"/>
        <end position="297"/>
    </location>
</feature>
<feature type="repeat" description="LRR 4">
    <location>
        <begin position="306"/>
        <end position="326"/>
    </location>
</feature>
<feature type="repeat" description="LRR 5">
    <location>
        <begin position="334"/>
        <end position="354"/>
    </location>
</feature>
<feature type="region of interest" description="Disordered" evidence="2">
    <location>
        <begin position="1"/>
        <end position="43"/>
    </location>
</feature>
<feature type="region of interest" description="Disordered" evidence="2">
    <location>
        <begin position="460"/>
        <end position="662"/>
    </location>
</feature>
<feature type="compositionally biased region" description="Polar residues" evidence="2">
    <location>
        <begin position="468"/>
        <end position="481"/>
    </location>
</feature>
<feature type="compositionally biased region" description="Acidic residues" evidence="2">
    <location>
        <begin position="505"/>
        <end position="523"/>
    </location>
</feature>
<feature type="compositionally biased region" description="Pro residues" evidence="2">
    <location>
        <begin position="584"/>
        <end position="605"/>
    </location>
</feature>
<feature type="compositionally biased region" description="Pro residues" evidence="2">
    <location>
        <begin position="620"/>
        <end position="634"/>
    </location>
</feature>
<feature type="modified residue" description="Phosphoserine" evidence="7">
    <location>
        <position position="50"/>
    </location>
</feature>
<feature type="modified residue" description="Phosphoserine" evidence="1">
    <location>
        <position position="56"/>
    </location>
</feature>
<feature type="modified residue" description="Phosphoserine" evidence="6">
    <location>
        <position position="561"/>
    </location>
</feature>
<feature type="splice variant" id="VSP_031754" description="In isoform 2." evidence="4">
    <location>
        <begin position="1"/>
        <end position="473"/>
    </location>
</feature>
<feature type="splice variant" id="VSP_031755" description="In isoform 2." evidence="4">
    <original>ELSCSKNEKELEELLLEASQESGQETL</original>
    <variation>GERGPRAGVEGPWVLYVTPGKPLPVVGLSFPLFKMVLAGASKVGLSSHLHPASLGSWELFLGWGGM</variation>
    <location>
        <begin position="665"/>
        <end position="691"/>
    </location>
</feature>
<comment type="function">
    <text evidence="3">Inhibits phosphatase activity of protein phosphatase 1 (PP1) complexes.</text>
</comment>
<comment type="subunit">
    <text evidence="3">Interacts with PPP1CA.</text>
</comment>
<comment type="interaction">
    <interactant intactId="EBI-5235692">
        <id>O75864</id>
    </interactant>
    <interactant intactId="EBI-10181188">
        <id>Q8N7W2-2</id>
        <label>BEND7</label>
    </interactant>
    <organismsDiffer>false</organismsDiffer>
    <experiments>3</experiments>
</comment>
<comment type="interaction">
    <interactant intactId="EBI-5235692">
        <id>O75864</id>
    </interactant>
    <interactant intactId="EBI-1759806">
        <id>O75593</id>
        <label>FOXH1</label>
    </interactant>
    <organismsDiffer>false</organismsDiffer>
    <experiments>3</experiments>
</comment>
<comment type="interaction">
    <interactant intactId="EBI-5235692">
        <id>O75864</id>
    </interactant>
    <interactant intactId="EBI-9512317">
        <id>B2RXH8</id>
        <label>HNRNPCL2</label>
    </interactant>
    <organismsDiffer>false</organismsDiffer>
    <experiments>3</experiments>
</comment>
<comment type="interaction">
    <interactant intactId="EBI-5235692">
        <id>O75864</id>
    </interactant>
    <interactant intactId="EBI-22311199">
        <id>Q3LI67</id>
        <label>KRTAP6-3</label>
    </interactant>
    <organismsDiffer>false</organismsDiffer>
    <experiments>3</experiments>
</comment>
<comment type="interaction">
    <interactant intactId="EBI-5235692">
        <id>O75864</id>
    </interactant>
    <interactant intactId="EBI-11022007">
        <id>Q9HBE1-4</id>
        <label>PATZ1</label>
    </interactant>
    <organismsDiffer>false</organismsDiffer>
    <experiments>3</experiments>
</comment>
<comment type="interaction">
    <interactant intactId="EBI-5235692">
        <id>O75864</id>
    </interactant>
    <interactant intactId="EBI-357253">
        <id>P62136</id>
        <label>PPP1CA</label>
    </interactant>
    <organismsDiffer>false</organismsDiffer>
    <experiments>6</experiments>
</comment>
<comment type="interaction">
    <interactant intactId="EBI-5235692">
        <id>O75864</id>
    </interactant>
    <interactant intactId="EBI-8642021">
        <id>Q15415</id>
        <label>RBMY1J</label>
    </interactant>
    <organismsDiffer>false</organismsDiffer>
    <experiments>3</experiments>
</comment>
<comment type="interaction">
    <interactant intactId="EBI-5235692">
        <id>O75864</id>
    </interactant>
    <interactant intactId="EBI-11987469">
        <id>Q6ZRY4</id>
        <label>RBPMS2</label>
    </interactant>
    <organismsDiffer>false</organismsDiffer>
    <experiments>3</experiments>
</comment>
<comment type="interaction">
    <interactant intactId="EBI-5235692">
        <id>O75864</id>
    </interactant>
    <interactant intactId="EBI-745775">
        <id>Q96H86</id>
        <label>ZNF764</label>
    </interactant>
    <organismsDiffer>false</organismsDiffer>
    <experiments>3</experiments>
</comment>
<comment type="interaction">
    <interactant intactId="EBI-5235692">
        <id>O75864</id>
    </interactant>
    <interactant intactId="EBI-11962574">
        <id>Q96EG3</id>
        <label>ZNF837</label>
    </interactant>
    <organismsDiffer>false</organismsDiffer>
    <experiments>3</experiments>
</comment>
<comment type="alternative products">
    <event type="alternative splicing"/>
    <isoform>
        <id>O75864-1</id>
        <name>1</name>
        <sequence type="displayed"/>
    </isoform>
    <isoform>
        <id>O75864-2</id>
        <name>2</name>
        <sequence type="described" ref="VSP_031754 VSP_031755"/>
    </isoform>
</comment>
<comment type="miscellaneous">
    <molecule>Isoform 2</molecule>
    <text evidence="5">Due to an intron retention.</text>
</comment>
<comment type="similarity">
    <text evidence="5">Belongs to the PPP1R37 family.</text>
</comment>
<comment type="sequence caution" evidence="5">
    <conflict type="erroneous gene model prediction">
        <sequence resource="EMBL-CDS" id="AAC62258"/>
    </conflict>
</comment>
<comment type="sequence caution" evidence="5">
    <conflict type="erroneous initiation">
        <sequence resource="EMBL-CDS" id="BAB85572"/>
    </conflict>
    <text>Extended N-terminus.</text>
</comment>
<evidence type="ECO:0000250" key="1">
    <source>
        <dbReference type="UniProtKB" id="B2RYF1"/>
    </source>
</evidence>
<evidence type="ECO:0000256" key="2">
    <source>
        <dbReference type="SAM" id="MobiDB-lite"/>
    </source>
</evidence>
<evidence type="ECO:0000269" key="3">
    <source>
    </source>
</evidence>
<evidence type="ECO:0000303" key="4">
    <source>
    </source>
</evidence>
<evidence type="ECO:0000305" key="5"/>
<evidence type="ECO:0007744" key="6">
    <source>
    </source>
</evidence>
<evidence type="ECO:0007744" key="7">
    <source>
    </source>
</evidence>
<gene>
    <name type="primary">PPP1R37</name>
    <name type="synonym">KIAA1986</name>
    <name type="synonym">LRRC68</name>
</gene>